<comment type="function">
    <text evidence="5">Positively regulates the Wnt signaling pathway by stabilizing beta-catenin through the association with GSK-3. May play a role in tumor progression and collaborate with PIM1 and MYC in lymphomagenesis.</text>
</comment>
<comment type="subunit">
    <text evidence="4">Binds DVL1. Binds GSK-3 and prevent GSK-3-dependent phosphorylation.</text>
</comment>
<comment type="interaction">
    <interactant intactId="EBI-3934879">
        <id>Q92837</id>
    </interactant>
    <interactant intactId="EBI-1044067">
        <id>P49840</id>
        <label>GSK3A</label>
    </interactant>
    <organismsDiffer>false</organismsDiffer>
    <experiments>5</experiments>
</comment>
<comment type="interaction">
    <interactant intactId="EBI-3934879">
        <id>Q92837</id>
    </interactant>
    <interactant intactId="EBI-373586">
        <id>P49841</id>
        <label>GSK3B</label>
    </interactant>
    <organismsDiffer>false</organismsDiffer>
    <experiments>5</experiments>
</comment>
<comment type="subcellular location">
    <subcellularLocation>
        <location>Cytoplasm</location>
    </subcellularLocation>
</comment>
<comment type="PTM">
    <text evidence="1">Phosphorylated.</text>
</comment>
<comment type="similarity">
    <text evidence="6">Belongs to the GSK-3-binding protein family.</text>
</comment>
<accession>Q92837</accession>
<accession>Q5JTI1</accession>
<accession>Q8NE74</accession>
<accession>Q8TDW9</accession>
<reference key="1">
    <citation type="journal article" date="1997" name="EMBO J.">
        <title>Activation of a novel proto-oncogene, Frat1, contributes to progression of mouse T-cell lymphomas.</title>
        <authorList>
            <person name="Jonkers J."/>
            <person name="Korswagen H.C."/>
            <person name="Acton D."/>
            <person name="Breuer M."/>
            <person name="Berns A."/>
        </authorList>
    </citation>
    <scope>NUCLEOTIDE SEQUENCE [MRNA]</scope>
</reference>
<reference key="2">
    <citation type="submission" date="1999-05" db="EMBL/GenBank/DDBJ databases">
        <authorList>
            <person name="Jonkers J."/>
            <person name="Korswagen H.C."/>
            <person name="Acton D."/>
            <person name="Breuer M."/>
            <person name="Berns A."/>
        </authorList>
    </citation>
    <scope>SEQUENCE REVISION TO 170</scope>
</reference>
<reference key="3">
    <citation type="journal article" date="2002" name="Int. J. Oncol.">
        <title>Molecular cloning and expression of proto-oncogene FRAT1 in human cancer.</title>
        <authorList>
            <person name="Saitoh T."/>
            <person name="Mine T."/>
            <person name="Katoh M."/>
        </authorList>
    </citation>
    <scope>NUCLEOTIDE SEQUENCE [MRNA]</scope>
    <source>
        <tissue>Lung</tissue>
    </source>
</reference>
<reference key="4">
    <citation type="journal article" date="2004" name="Nature">
        <title>The DNA sequence and comparative analysis of human chromosome 10.</title>
        <authorList>
            <person name="Deloukas P."/>
            <person name="Earthrowl M.E."/>
            <person name="Grafham D.V."/>
            <person name="Rubenfield M."/>
            <person name="French L."/>
            <person name="Steward C.A."/>
            <person name="Sims S.K."/>
            <person name="Jones M.C."/>
            <person name="Searle S."/>
            <person name="Scott C."/>
            <person name="Howe K."/>
            <person name="Hunt S.E."/>
            <person name="Andrews T.D."/>
            <person name="Gilbert J.G.R."/>
            <person name="Swarbreck D."/>
            <person name="Ashurst J.L."/>
            <person name="Taylor A."/>
            <person name="Battles J."/>
            <person name="Bird C.P."/>
            <person name="Ainscough R."/>
            <person name="Almeida J.P."/>
            <person name="Ashwell R.I.S."/>
            <person name="Ambrose K.D."/>
            <person name="Babbage A.K."/>
            <person name="Bagguley C.L."/>
            <person name="Bailey J."/>
            <person name="Banerjee R."/>
            <person name="Bates K."/>
            <person name="Beasley H."/>
            <person name="Bray-Allen S."/>
            <person name="Brown A.J."/>
            <person name="Brown J.Y."/>
            <person name="Burford D.C."/>
            <person name="Burrill W."/>
            <person name="Burton J."/>
            <person name="Cahill P."/>
            <person name="Camire D."/>
            <person name="Carter N.P."/>
            <person name="Chapman J.C."/>
            <person name="Clark S.Y."/>
            <person name="Clarke G."/>
            <person name="Clee C.M."/>
            <person name="Clegg S."/>
            <person name="Corby N."/>
            <person name="Coulson A."/>
            <person name="Dhami P."/>
            <person name="Dutta I."/>
            <person name="Dunn M."/>
            <person name="Faulkner L."/>
            <person name="Frankish A."/>
            <person name="Frankland J.A."/>
            <person name="Garner P."/>
            <person name="Garnett J."/>
            <person name="Gribble S."/>
            <person name="Griffiths C."/>
            <person name="Grocock R."/>
            <person name="Gustafson E."/>
            <person name="Hammond S."/>
            <person name="Harley J.L."/>
            <person name="Hart E."/>
            <person name="Heath P.D."/>
            <person name="Ho T.P."/>
            <person name="Hopkins B."/>
            <person name="Horne J."/>
            <person name="Howden P.J."/>
            <person name="Huckle E."/>
            <person name="Hynds C."/>
            <person name="Johnson C."/>
            <person name="Johnson D."/>
            <person name="Kana A."/>
            <person name="Kay M."/>
            <person name="Kimberley A.M."/>
            <person name="Kershaw J.K."/>
            <person name="Kokkinaki M."/>
            <person name="Laird G.K."/>
            <person name="Lawlor S."/>
            <person name="Lee H.M."/>
            <person name="Leongamornlert D.A."/>
            <person name="Laird G."/>
            <person name="Lloyd C."/>
            <person name="Lloyd D.M."/>
            <person name="Loveland J."/>
            <person name="Lovell J."/>
            <person name="McLaren S."/>
            <person name="McLay K.E."/>
            <person name="McMurray A."/>
            <person name="Mashreghi-Mohammadi M."/>
            <person name="Matthews L."/>
            <person name="Milne S."/>
            <person name="Nickerson T."/>
            <person name="Nguyen M."/>
            <person name="Overton-Larty E."/>
            <person name="Palmer S.A."/>
            <person name="Pearce A.V."/>
            <person name="Peck A.I."/>
            <person name="Pelan S."/>
            <person name="Phillimore B."/>
            <person name="Porter K."/>
            <person name="Rice C.M."/>
            <person name="Rogosin A."/>
            <person name="Ross M.T."/>
            <person name="Sarafidou T."/>
            <person name="Sehra H.K."/>
            <person name="Shownkeen R."/>
            <person name="Skuce C.D."/>
            <person name="Smith M."/>
            <person name="Standring L."/>
            <person name="Sycamore N."/>
            <person name="Tester J."/>
            <person name="Thorpe A."/>
            <person name="Torcasso W."/>
            <person name="Tracey A."/>
            <person name="Tromans A."/>
            <person name="Tsolas J."/>
            <person name="Wall M."/>
            <person name="Walsh J."/>
            <person name="Wang H."/>
            <person name="Weinstock K."/>
            <person name="West A.P."/>
            <person name="Willey D.L."/>
            <person name="Whitehead S.L."/>
            <person name="Wilming L."/>
            <person name="Wray P.W."/>
            <person name="Young L."/>
            <person name="Chen Y."/>
            <person name="Lovering R.C."/>
            <person name="Moschonas N.K."/>
            <person name="Siebert R."/>
            <person name="Fechtel K."/>
            <person name="Bentley D."/>
            <person name="Durbin R.M."/>
            <person name="Hubbard T."/>
            <person name="Doucette-Stamm L."/>
            <person name="Beck S."/>
            <person name="Smith D.R."/>
            <person name="Rogers J."/>
        </authorList>
    </citation>
    <scope>NUCLEOTIDE SEQUENCE [LARGE SCALE GENOMIC DNA]</scope>
    <source>
        <tissue>Testis</tissue>
    </source>
</reference>
<reference key="5">
    <citation type="journal article" date="2004" name="Genome Res.">
        <title>The status, quality, and expansion of the NIH full-length cDNA project: the Mammalian Gene Collection (MGC).</title>
        <authorList>
            <consortium name="The MGC Project Team"/>
        </authorList>
    </citation>
    <scope>NUCLEOTIDE SEQUENCE [LARGE SCALE MRNA]</scope>
    <source>
        <tissue>Testis</tissue>
    </source>
</reference>
<reference key="6">
    <citation type="journal article" date="2003" name="J. Biol. Chem.">
        <title>Casein kinase I epsilon enhances the binding of Dvl-1 to Frat-1 and is essential for Wnt-3a-induced accumulation of beta-catenin.</title>
        <authorList>
            <person name="Hino S."/>
            <person name="Michiue T."/>
            <person name="Asashima M."/>
            <person name="Kikuchi A."/>
        </authorList>
    </citation>
    <scope>INTERACTION WITH DVL1</scope>
    <scope>ROLE IN WNT SIGNALING</scope>
</reference>
<reference key="7">
    <citation type="journal article" date="2009" name="Mol. Cell. Proteomics">
        <title>Large-scale proteomics analysis of the human kinome.</title>
        <authorList>
            <person name="Oppermann F.S."/>
            <person name="Gnad F."/>
            <person name="Olsen J.V."/>
            <person name="Hornberger R."/>
            <person name="Greff Z."/>
            <person name="Keri G."/>
            <person name="Mann M."/>
            <person name="Daub H."/>
        </authorList>
    </citation>
    <scope>PHOSPHORYLATION [LARGE SCALE ANALYSIS] AT SER-88</scope>
    <scope>IDENTIFICATION BY MASS SPECTROMETRY [LARGE SCALE ANALYSIS]</scope>
</reference>
<reference key="8">
    <citation type="journal article" date="2001" name="Structure">
        <title>The structure of phosphorylated GSK-3beta complexed with a peptide, FRATtide, that inhibits beta-catenin phosphorylation.</title>
        <authorList>
            <person name="Bax B."/>
            <person name="Carter P.S."/>
            <person name="Lewis C."/>
            <person name="Guy A.R."/>
            <person name="Bridges A."/>
            <person name="Tanner R."/>
            <person name="Pettman G."/>
            <person name="Mannix C."/>
            <person name="Culbert A.A."/>
            <person name="Brown M.J.B."/>
            <person name="Smith D.G."/>
            <person name="Reith A.D."/>
        </authorList>
    </citation>
    <scope>X-RAY CRYSTALLOGRAPHY (2.6 ANGSTROMS) OF 198-223 IN COMPLEX WITH GSK-3</scope>
</reference>
<evidence type="ECO:0000250" key="1"/>
<evidence type="ECO:0000250" key="2">
    <source>
        <dbReference type="UniProtKB" id="P70339"/>
    </source>
</evidence>
<evidence type="ECO:0000256" key="3">
    <source>
        <dbReference type="SAM" id="MobiDB-lite"/>
    </source>
</evidence>
<evidence type="ECO:0000269" key="4">
    <source>
    </source>
</evidence>
<evidence type="ECO:0000269" key="5">
    <source>
    </source>
</evidence>
<evidence type="ECO:0000305" key="6"/>
<evidence type="ECO:0007744" key="7">
    <source>
    </source>
</evidence>
<evidence type="ECO:0007829" key="8">
    <source>
        <dbReference type="PDB" id="4AFJ"/>
    </source>
</evidence>
<keyword id="KW-0002">3D-structure</keyword>
<keyword id="KW-0963">Cytoplasm</keyword>
<keyword id="KW-0597">Phosphoprotein</keyword>
<keyword id="KW-1267">Proteomics identification</keyword>
<keyword id="KW-0656">Proto-oncogene</keyword>
<keyword id="KW-1185">Reference proteome</keyword>
<keyword id="KW-0879">Wnt signaling pathway</keyword>
<organism>
    <name type="scientific">Homo sapiens</name>
    <name type="common">Human</name>
    <dbReference type="NCBI Taxonomy" id="9606"/>
    <lineage>
        <taxon>Eukaryota</taxon>
        <taxon>Metazoa</taxon>
        <taxon>Chordata</taxon>
        <taxon>Craniata</taxon>
        <taxon>Vertebrata</taxon>
        <taxon>Euteleostomi</taxon>
        <taxon>Mammalia</taxon>
        <taxon>Eutheria</taxon>
        <taxon>Euarchontoglires</taxon>
        <taxon>Primates</taxon>
        <taxon>Haplorrhini</taxon>
        <taxon>Catarrhini</taxon>
        <taxon>Hominidae</taxon>
        <taxon>Homo</taxon>
    </lineage>
</organism>
<name>FRAT1_HUMAN</name>
<protein>
    <recommendedName>
        <fullName>Proto-oncogene FRAT1</fullName>
    </recommendedName>
    <alternativeName>
        <fullName>Frequently rearranged in advanced T-cell lymphomas 1</fullName>
        <shortName>FRAT-1</shortName>
    </alternativeName>
</protein>
<proteinExistence type="evidence at protein level"/>
<sequence>MPCRREEEEEAGEEAEGEEEEEDSFLLLQQSVALGSSGEVDRLVAQIGETLQLDAAQHSPASPCGPPGAPLRAPGPLAAAVPADKARSPAVPLLLPPALAETVGPAPPGVLRCALGDRGRVRGRAAPYCVAELATGPSALSPLPPQADLDGPPGAGKQGIPQPLSGPCRRGWLRGAAASRRLQQRRGSQPETRTGDDDPHRLLQQLVLSGNLIKEAVRRLHSRRLQLRAKLPQRPLLGPLSAPVHEPPSPRSPRAACSDPGASGRAQLRTGDGVLVPGS</sequence>
<feature type="chain" id="PRO_0000087332" description="Proto-oncogene FRAT1">
    <location>
        <begin position="1"/>
        <end position="279"/>
    </location>
</feature>
<feature type="region of interest" description="Disordered" evidence="3">
    <location>
        <begin position="1"/>
        <end position="24"/>
    </location>
</feature>
<feature type="region of interest" description="Disordered" evidence="3">
    <location>
        <begin position="56"/>
        <end position="76"/>
    </location>
</feature>
<feature type="region of interest" description="Disordered" evidence="3">
    <location>
        <begin position="136"/>
        <end position="200"/>
    </location>
</feature>
<feature type="region of interest" description="Involved in GSK-3 binding">
    <location>
        <begin position="198"/>
        <end position="220"/>
    </location>
</feature>
<feature type="region of interest" description="Disordered" evidence="3">
    <location>
        <begin position="228"/>
        <end position="279"/>
    </location>
</feature>
<feature type="compositionally biased region" description="Acidic residues" evidence="3">
    <location>
        <begin position="7"/>
        <end position="24"/>
    </location>
</feature>
<feature type="modified residue" description="Phosphoserine" evidence="7">
    <location>
        <position position="88"/>
    </location>
</feature>
<feature type="modified residue" description="Phosphoserine" evidence="2">
    <location>
        <position position="249"/>
    </location>
</feature>
<feature type="modified residue" description="Phosphoserine" evidence="2">
    <location>
        <position position="252"/>
    </location>
</feature>
<feature type="sequence conflict" description="In Ref. 1; AAB97096." evidence="6" ref="1">
    <original>H</original>
    <variation>D</variation>
    <location>
        <position position="58"/>
    </location>
</feature>
<feature type="sequence conflict" description="In Ref. 5; AAH34476." evidence="6" ref="5">
    <original>S</original>
    <variation>P</variation>
    <location>
        <position position="179"/>
    </location>
</feature>
<feature type="helix" evidence="8">
    <location>
        <begin position="201"/>
        <end position="209"/>
    </location>
</feature>
<feature type="helix" evidence="8">
    <location>
        <begin position="212"/>
        <end position="219"/>
    </location>
</feature>
<gene>
    <name type="primary">FRAT1</name>
</gene>
<dbReference type="EMBL" id="U58975">
    <property type="protein sequence ID" value="AAB97096.2"/>
    <property type="molecule type" value="mRNA"/>
</dbReference>
<dbReference type="EMBL" id="AB074890">
    <property type="protein sequence ID" value="BAB86352.1"/>
    <property type="molecule type" value="mRNA"/>
</dbReference>
<dbReference type="EMBL" id="AL355490">
    <property type="status" value="NOT_ANNOTATED_CDS"/>
    <property type="molecule type" value="Genomic_DNA"/>
</dbReference>
<dbReference type="EMBL" id="BC034476">
    <property type="protein sequence ID" value="AAH34476.1"/>
    <property type="molecule type" value="mRNA"/>
</dbReference>
<dbReference type="CCDS" id="CCDS7455.1"/>
<dbReference type="RefSeq" id="NP_005470.2">
    <property type="nucleotide sequence ID" value="NM_005479.3"/>
</dbReference>
<dbReference type="PDB" id="1GNG">
    <property type="method" value="X-ray"/>
    <property type="resolution" value="2.60 A"/>
    <property type="chains" value="X/Y=188-226"/>
</dbReference>
<dbReference type="PDB" id="3ZRK">
    <property type="method" value="X-ray"/>
    <property type="resolution" value="2.37 A"/>
    <property type="chains" value="X/Y=197-226"/>
</dbReference>
<dbReference type="PDB" id="3ZRL">
    <property type="method" value="X-ray"/>
    <property type="resolution" value="2.48 A"/>
    <property type="chains" value="X/Y=197-226"/>
</dbReference>
<dbReference type="PDB" id="3ZRM">
    <property type="method" value="X-ray"/>
    <property type="resolution" value="2.49 A"/>
    <property type="chains" value="X/Y=197-226"/>
</dbReference>
<dbReference type="PDB" id="4AFJ">
    <property type="method" value="X-ray"/>
    <property type="resolution" value="1.98 A"/>
    <property type="chains" value="X/Y=197-226"/>
</dbReference>
<dbReference type="PDB" id="5OY4">
    <property type="method" value="X-ray"/>
    <property type="resolution" value="3.20 A"/>
    <property type="chains" value="X/Y=1-279"/>
</dbReference>
<dbReference type="PDBsum" id="1GNG"/>
<dbReference type="PDBsum" id="3ZRK"/>
<dbReference type="PDBsum" id="3ZRL"/>
<dbReference type="PDBsum" id="3ZRM"/>
<dbReference type="PDBsum" id="4AFJ"/>
<dbReference type="PDBsum" id="5OY4"/>
<dbReference type="SMR" id="Q92837"/>
<dbReference type="BioGRID" id="115340">
    <property type="interactions" value="18"/>
</dbReference>
<dbReference type="ComplexPortal" id="CPX-459">
    <property type="entry name" value="Nuclear export complex FRAT1-GSK3B"/>
</dbReference>
<dbReference type="FunCoup" id="Q92837">
    <property type="interactions" value="1348"/>
</dbReference>
<dbReference type="IntAct" id="Q92837">
    <property type="interactions" value="19"/>
</dbReference>
<dbReference type="STRING" id="9606.ENSP00000360060"/>
<dbReference type="iPTMnet" id="Q92837"/>
<dbReference type="PhosphoSitePlus" id="Q92837"/>
<dbReference type="BioMuta" id="FRAT1"/>
<dbReference type="DMDM" id="51338813"/>
<dbReference type="MassIVE" id="Q92837"/>
<dbReference type="PaxDb" id="9606-ENSP00000360060"/>
<dbReference type="PeptideAtlas" id="Q92837"/>
<dbReference type="ProteomicsDB" id="75521"/>
<dbReference type="Pumba" id="Q92837"/>
<dbReference type="Antibodypedia" id="30839">
    <property type="antibodies" value="119 antibodies from 28 providers"/>
</dbReference>
<dbReference type="DNASU" id="10023"/>
<dbReference type="Ensembl" id="ENST00000371021.5">
    <property type="protein sequence ID" value="ENSP00000360060.3"/>
    <property type="gene ID" value="ENSG00000165879.9"/>
</dbReference>
<dbReference type="GeneID" id="10023"/>
<dbReference type="KEGG" id="hsa:10023"/>
<dbReference type="MANE-Select" id="ENST00000371021.5">
    <property type="protein sequence ID" value="ENSP00000360060.3"/>
    <property type="RefSeq nucleotide sequence ID" value="NM_005479.4"/>
    <property type="RefSeq protein sequence ID" value="NP_005470.2"/>
</dbReference>
<dbReference type="UCSC" id="uc001knc.2">
    <property type="organism name" value="human"/>
</dbReference>
<dbReference type="AGR" id="HGNC:3944"/>
<dbReference type="CTD" id="10023"/>
<dbReference type="DisGeNET" id="10023"/>
<dbReference type="GeneCards" id="FRAT1"/>
<dbReference type="HGNC" id="HGNC:3944">
    <property type="gene designation" value="FRAT1"/>
</dbReference>
<dbReference type="HPA" id="ENSG00000165879">
    <property type="expression patterns" value="Low tissue specificity"/>
</dbReference>
<dbReference type="MIM" id="602503">
    <property type="type" value="gene"/>
</dbReference>
<dbReference type="neXtProt" id="NX_Q92837"/>
<dbReference type="OpenTargets" id="ENSG00000165879"/>
<dbReference type="PharmGKB" id="PA28361"/>
<dbReference type="VEuPathDB" id="HostDB:ENSG00000165879"/>
<dbReference type="eggNOG" id="ENOG502T09T">
    <property type="taxonomic scope" value="Eukaryota"/>
</dbReference>
<dbReference type="GeneTree" id="ENSGT00390000007081"/>
<dbReference type="HOGENOM" id="CLU_101225_1_0_1"/>
<dbReference type="InParanoid" id="Q92837"/>
<dbReference type="OMA" id="RCEQARG"/>
<dbReference type="OrthoDB" id="6381246at2759"/>
<dbReference type="PAN-GO" id="Q92837">
    <property type="GO annotations" value="2 GO annotations based on evolutionary models"/>
</dbReference>
<dbReference type="PhylomeDB" id="Q92837"/>
<dbReference type="TreeFam" id="TF330804"/>
<dbReference type="PathwayCommons" id="Q92837"/>
<dbReference type="Reactome" id="R-HSA-196299">
    <property type="pathway name" value="Beta-catenin phosphorylation cascade"/>
</dbReference>
<dbReference type="Reactome" id="R-HSA-4641262">
    <property type="pathway name" value="Disassembly of the destruction complex and recruitment of AXIN to the membrane"/>
</dbReference>
<dbReference type="SignaLink" id="Q92837"/>
<dbReference type="SIGNOR" id="Q92837"/>
<dbReference type="BioGRID-ORCS" id="10023">
    <property type="hits" value="21 hits in 1157 CRISPR screens"/>
</dbReference>
<dbReference type="ChiTaRS" id="FRAT1">
    <property type="organism name" value="human"/>
</dbReference>
<dbReference type="EvolutionaryTrace" id="Q92837"/>
<dbReference type="GeneWiki" id="FRAT1"/>
<dbReference type="GenomeRNAi" id="10023"/>
<dbReference type="Pharos" id="Q92837">
    <property type="development level" value="Tbio"/>
</dbReference>
<dbReference type="PRO" id="PR:Q92837"/>
<dbReference type="Proteomes" id="UP000005640">
    <property type="component" value="Chromosome 10"/>
</dbReference>
<dbReference type="RNAct" id="Q92837">
    <property type="molecule type" value="protein"/>
</dbReference>
<dbReference type="Bgee" id="ENSG00000165879">
    <property type="expression patterns" value="Expressed in blood and 144 other cell types or tissues"/>
</dbReference>
<dbReference type="GO" id="GO:0005737">
    <property type="term" value="C:cytoplasm"/>
    <property type="evidence" value="ECO:0000314"/>
    <property type="project" value="WormBase"/>
</dbReference>
<dbReference type="GO" id="GO:0005829">
    <property type="term" value="C:cytosol"/>
    <property type="evidence" value="ECO:0000314"/>
    <property type="project" value="HPA"/>
</dbReference>
<dbReference type="GO" id="GO:0043231">
    <property type="term" value="C:intracellular membrane-bounded organelle"/>
    <property type="evidence" value="ECO:0000314"/>
    <property type="project" value="HPA"/>
</dbReference>
<dbReference type="GO" id="GO:0005634">
    <property type="term" value="C:nucleus"/>
    <property type="evidence" value="ECO:0000314"/>
    <property type="project" value="ComplexPortal"/>
</dbReference>
<dbReference type="GO" id="GO:0140678">
    <property type="term" value="F:molecular function inhibitor activity"/>
    <property type="evidence" value="ECO:0000314"/>
    <property type="project" value="DisProt"/>
</dbReference>
<dbReference type="GO" id="GO:0060070">
    <property type="term" value="P:canonical Wnt signaling pathway"/>
    <property type="evidence" value="ECO:0000314"/>
    <property type="project" value="ComplexPortal"/>
</dbReference>
<dbReference type="GO" id="GO:0090263">
    <property type="term" value="P:positive regulation of canonical Wnt signaling pathway"/>
    <property type="evidence" value="ECO:0000316"/>
    <property type="project" value="WormBase"/>
</dbReference>
<dbReference type="GO" id="GO:0046825">
    <property type="term" value="P:regulation of protein export from nucleus"/>
    <property type="evidence" value="ECO:0000314"/>
    <property type="project" value="ComplexPortal"/>
</dbReference>
<dbReference type="DisProt" id="DP02373"/>
<dbReference type="IDEAL" id="IID00093"/>
<dbReference type="InterPro" id="IPR008014">
    <property type="entry name" value="GSK3-bd"/>
</dbReference>
<dbReference type="PANTHER" id="PTHR35154">
    <property type="entry name" value="GBP PROTEIN"/>
    <property type="match status" value="1"/>
</dbReference>
<dbReference type="PANTHER" id="PTHR35154:SF1">
    <property type="entry name" value="PROTO-ONCOGENE FRAT1"/>
    <property type="match status" value="1"/>
</dbReference>
<dbReference type="Pfam" id="PF05350">
    <property type="entry name" value="GSK-3_bind"/>
    <property type="match status" value="1"/>
</dbReference>